<evidence type="ECO:0000255" key="1">
    <source>
        <dbReference type="HAMAP-Rule" id="MF_00229"/>
    </source>
</evidence>
<proteinExistence type="inferred from homology"/>
<gene>
    <name evidence="1" type="primary">hutH</name>
    <name type="ordered locus">Spy49_1730</name>
</gene>
<dbReference type="EC" id="4.3.1.3" evidence="1"/>
<dbReference type="EMBL" id="CP000829">
    <property type="protein sequence ID" value="ACI61981.1"/>
    <property type="molecule type" value="Genomic_DNA"/>
</dbReference>
<dbReference type="SMR" id="B5XIY2"/>
<dbReference type="KEGG" id="soz:Spy49_1730"/>
<dbReference type="HOGENOM" id="CLU_014801_4_0_9"/>
<dbReference type="UniPathway" id="UPA00379">
    <property type="reaction ID" value="UER00549"/>
</dbReference>
<dbReference type="Proteomes" id="UP000001039">
    <property type="component" value="Chromosome"/>
</dbReference>
<dbReference type="GO" id="GO:0005737">
    <property type="term" value="C:cytoplasm"/>
    <property type="evidence" value="ECO:0007669"/>
    <property type="project" value="UniProtKB-SubCell"/>
</dbReference>
<dbReference type="GO" id="GO:0004397">
    <property type="term" value="F:histidine ammonia-lyase activity"/>
    <property type="evidence" value="ECO:0007669"/>
    <property type="project" value="UniProtKB-UniRule"/>
</dbReference>
<dbReference type="GO" id="GO:0019556">
    <property type="term" value="P:L-histidine catabolic process to glutamate and formamide"/>
    <property type="evidence" value="ECO:0007669"/>
    <property type="project" value="UniProtKB-UniPathway"/>
</dbReference>
<dbReference type="GO" id="GO:0019557">
    <property type="term" value="P:L-histidine catabolic process to glutamate and formate"/>
    <property type="evidence" value="ECO:0007669"/>
    <property type="project" value="UniProtKB-UniPathway"/>
</dbReference>
<dbReference type="CDD" id="cd00332">
    <property type="entry name" value="PAL-HAL"/>
    <property type="match status" value="1"/>
</dbReference>
<dbReference type="FunFam" id="1.10.275.10:FF:000005">
    <property type="entry name" value="Histidine ammonia-lyase"/>
    <property type="match status" value="1"/>
</dbReference>
<dbReference type="FunFam" id="1.20.200.10:FF:000003">
    <property type="entry name" value="Histidine ammonia-lyase"/>
    <property type="match status" value="1"/>
</dbReference>
<dbReference type="Gene3D" id="1.20.200.10">
    <property type="entry name" value="Fumarase/aspartase (Central domain)"/>
    <property type="match status" value="1"/>
</dbReference>
<dbReference type="Gene3D" id="1.10.275.10">
    <property type="entry name" value="Fumarase/aspartase (N-terminal domain)"/>
    <property type="match status" value="1"/>
</dbReference>
<dbReference type="HAMAP" id="MF_00229">
    <property type="entry name" value="His_ammonia_lyase"/>
    <property type="match status" value="1"/>
</dbReference>
<dbReference type="InterPro" id="IPR001106">
    <property type="entry name" value="Aromatic_Lyase"/>
</dbReference>
<dbReference type="InterPro" id="IPR024083">
    <property type="entry name" value="Fumarase/histidase_N"/>
</dbReference>
<dbReference type="InterPro" id="IPR005921">
    <property type="entry name" value="HutH"/>
</dbReference>
<dbReference type="InterPro" id="IPR008948">
    <property type="entry name" value="L-Aspartase-like"/>
</dbReference>
<dbReference type="InterPro" id="IPR022313">
    <property type="entry name" value="Phe/His_NH3-lyase_AS"/>
</dbReference>
<dbReference type="NCBIfam" id="TIGR01225">
    <property type="entry name" value="hutH"/>
    <property type="match status" value="1"/>
</dbReference>
<dbReference type="NCBIfam" id="NF006871">
    <property type="entry name" value="PRK09367.1"/>
    <property type="match status" value="1"/>
</dbReference>
<dbReference type="PANTHER" id="PTHR10362">
    <property type="entry name" value="HISTIDINE AMMONIA-LYASE"/>
    <property type="match status" value="1"/>
</dbReference>
<dbReference type="Pfam" id="PF00221">
    <property type="entry name" value="Lyase_aromatic"/>
    <property type="match status" value="1"/>
</dbReference>
<dbReference type="SUPFAM" id="SSF48557">
    <property type="entry name" value="L-aspartase-like"/>
    <property type="match status" value="1"/>
</dbReference>
<dbReference type="PROSITE" id="PS00488">
    <property type="entry name" value="PAL_HISTIDASE"/>
    <property type="match status" value="1"/>
</dbReference>
<feature type="chain" id="PRO_1000100455" description="Histidine ammonia-lyase">
    <location>
        <begin position="1"/>
        <end position="513"/>
    </location>
</feature>
<feature type="modified residue" description="2,3-didehydroalanine (Ser)" evidence="1">
    <location>
        <position position="145"/>
    </location>
</feature>
<feature type="cross-link" description="5-imidazolinone (Ala-Gly)" evidence="1">
    <location>
        <begin position="144"/>
        <end position="146"/>
    </location>
</feature>
<protein>
    <recommendedName>
        <fullName evidence="1">Histidine ammonia-lyase</fullName>
        <shortName evidence="1">Histidase</shortName>
        <ecNumber evidence="1">4.3.1.3</ecNumber>
    </recommendedName>
</protein>
<sequence>MTRVINLDGESLTLEDVIAIARQGVACRIDDSAVEAVNASRKIVDDIVSEKRVVYGVTTGFGSLCNVSISPEDTVQLQENLIRTHASGFGDPLPEDAVRAIMLIRINSLVKGYSGIRLSTIEKLLELLNKGVHPYIPEKGSLGASGDLAPLAHMVLPMLGLGKAYYKGELLSGQEALDKAGIDKISLAAKEGLALINGTTVLTAIGALATYDAIQLLKLSDLAGALSLEVHNGITSPFEENLHTIRPQSGQLATARNIRNLLEGSQNTTVATQSRVQDPYTLRCMPQIHGASKDSIAYVKSKVDIEINSVTDNPIICKDGHVISGGNFHGEPMAQPFDFLGIAISEIGNVSERRVERLVNSQLSKLPSFLVKYPGLNSGFMITQYACASLASENKVLAHPASVDSIPSCENQEDFVSMGTTAARKAFEILKNSRRIVATEIMAACQALDLKSENHELGKGTKVAYDLFRKEVNFIEHDKHIEIYDELNKASTVIEDPSFLEAVEQAVELSIQF</sequence>
<name>HUTH_STRPZ</name>
<keyword id="KW-0963">Cytoplasm</keyword>
<keyword id="KW-0369">Histidine metabolism</keyword>
<keyword id="KW-0456">Lyase</keyword>
<comment type="catalytic activity">
    <reaction evidence="1">
        <text>L-histidine = trans-urocanate + NH4(+)</text>
        <dbReference type="Rhea" id="RHEA:21232"/>
        <dbReference type="ChEBI" id="CHEBI:17771"/>
        <dbReference type="ChEBI" id="CHEBI:28938"/>
        <dbReference type="ChEBI" id="CHEBI:57595"/>
        <dbReference type="EC" id="4.3.1.3"/>
    </reaction>
</comment>
<comment type="pathway">
    <text evidence="1">Amino-acid degradation; L-histidine degradation into L-glutamate; N-formimidoyl-L-glutamate from L-histidine: step 1/3.</text>
</comment>
<comment type="subcellular location">
    <subcellularLocation>
        <location evidence="1">Cytoplasm</location>
    </subcellularLocation>
</comment>
<comment type="PTM">
    <text evidence="1">Contains an active site 4-methylidene-imidazol-5-one (MIO), which is formed autocatalytically by cyclization and dehydration of residues Ala-Ser-Gly.</text>
</comment>
<comment type="similarity">
    <text evidence="1">Belongs to the PAL/histidase family.</text>
</comment>
<accession>B5XIY2</accession>
<reference key="1">
    <citation type="journal article" date="2008" name="J. Bacteriol.">
        <title>Genome sequence of a nephritogenic and highly transformable M49 strain of Streptococcus pyogenes.</title>
        <authorList>
            <person name="McShan W.M."/>
            <person name="Ferretti J.J."/>
            <person name="Karasawa T."/>
            <person name="Suvorov A.N."/>
            <person name="Lin S."/>
            <person name="Qin B."/>
            <person name="Jia H."/>
            <person name="Kenton S."/>
            <person name="Najar F."/>
            <person name="Wu H."/>
            <person name="Scott J."/>
            <person name="Roe B.A."/>
            <person name="Savic D.J."/>
        </authorList>
    </citation>
    <scope>NUCLEOTIDE SEQUENCE [LARGE SCALE GENOMIC DNA]</scope>
    <source>
        <strain>NZ131</strain>
    </source>
</reference>
<organism>
    <name type="scientific">Streptococcus pyogenes serotype M49 (strain NZ131)</name>
    <dbReference type="NCBI Taxonomy" id="471876"/>
    <lineage>
        <taxon>Bacteria</taxon>
        <taxon>Bacillati</taxon>
        <taxon>Bacillota</taxon>
        <taxon>Bacilli</taxon>
        <taxon>Lactobacillales</taxon>
        <taxon>Streptococcaceae</taxon>
        <taxon>Streptococcus</taxon>
    </lineage>
</organism>